<organism>
    <name type="scientific">Rickettsia conorii (strain ATCC VR-613 / Malish 7)</name>
    <dbReference type="NCBI Taxonomy" id="272944"/>
    <lineage>
        <taxon>Bacteria</taxon>
        <taxon>Pseudomonadati</taxon>
        <taxon>Pseudomonadota</taxon>
        <taxon>Alphaproteobacteria</taxon>
        <taxon>Rickettsiales</taxon>
        <taxon>Rickettsiaceae</taxon>
        <taxon>Rickettsieae</taxon>
        <taxon>Rickettsia</taxon>
        <taxon>spotted fever group</taxon>
    </lineage>
</organism>
<proteinExistence type="inferred from homology"/>
<protein>
    <recommendedName>
        <fullName evidence="1">Large ribosomal subunit protein uL16</fullName>
    </recommendedName>
    <alternativeName>
        <fullName evidence="2">50S ribosomal protein L16</fullName>
    </alternativeName>
</protein>
<comment type="function">
    <text evidence="1">Binds 23S rRNA and is also seen to make contacts with the A and possibly P site tRNAs.</text>
</comment>
<comment type="subunit">
    <text evidence="1">Part of the 50S ribosomal subunit.</text>
</comment>
<comment type="similarity">
    <text evidence="1">Belongs to the universal ribosomal protein uL16 family.</text>
</comment>
<feature type="chain" id="PRO_0000062187" description="Large ribosomal subunit protein uL16">
    <location>
        <begin position="1"/>
        <end position="136"/>
    </location>
</feature>
<keyword id="KW-0687">Ribonucleoprotein</keyword>
<keyword id="KW-0689">Ribosomal protein</keyword>
<keyword id="KW-0694">RNA-binding</keyword>
<keyword id="KW-0699">rRNA-binding</keyword>
<keyword id="KW-0820">tRNA-binding</keyword>
<reference key="1">
    <citation type="journal article" date="2001" name="Science">
        <title>Mechanisms of evolution in Rickettsia conorii and R. prowazekii.</title>
        <authorList>
            <person name="Ogata H."/>
            <person name="Audic S."/>
            <person name="Renesto-Audiffren P."/>
            <person name="Fournier P.-E."/>
            <person name="Barbe V."/>
            <person name="Samson D."/>
            <person name="Roux V."/>
            <person name="Cossart P."/>
            <person name="Weissenbach J."/>
            <person name="Claverie J.-M."/>
            <person name="Raoult D."/>
        </authorList>
    </citation>
    <scope>NUCLEOTIDE SEQUENCE [LARGE SCALE GENOMIC DNA]</scope>
    <source>
        <strain>ATCC VR-613 / Malish 7</strain>
    </source>
</reference>
<dbReference type="EMBL" id="AE006914">
    <property type="protein sequence ID" value="AAL03537.1"/>
    <property type="molecule type" value="Genomic_DNA"/>
</dbReference>
<dbReference type="PIR" id="G97824">
    <property type="entry name" value="G97824"/>
</dbReference>
<dbReference type="RefSeq" id="WP_004997806.1">
    <property type="nucleotide sequence ID" value="NC_003103.1"/>
</dbReference>
<dbReference type="SMR" id="Q92GX3"/>
<dbReference type="GeneID" id="95361479"/>
<dbReference type="KEGG" id="rco:RC0999"/>
<dbReference type="HOGENOM" id="CLU_078858_2_1_5"/>
<dbReference type="Proteomes" id="UP000000816">
    <property type="component" value="Chromosome"/>
</dbReference>
<dbReference type="GO" id="GO:0022625">
    <property type="term" value="C:cytosolic large ribosomal subunit"/>
    <property type="evidence" value="ECO:0007669"/>
    <property type="project" value="TreeGrafter"/>
</dbReference>
<dbReference type="GO" id="GO:0019843">
    <property type="term" value="F:rRNA binding"/>
    <property type="evidence" value="ECO:0007669"/>
    <property type="project" value="UniProtKB-UniRule"/>
</dbReference>
<dbReference type="GO" id="GO:0003735">
    <property type="term" value="F:structural constituent of ribosome"/>
    <property type="evidence" value="ECO:0007669"/>
    <property type="project" value="InterPro"/>
</dbReference>
<dbReference type="GO" id="GO:0000049">
    <property type="term" value="F:tRNA binding"/>
    <property type="evidence" value="ECO:0007669"/>
    <property type="project" value="UniProtKB-KW"/>
</dbReference>
<dbReference type="GO" id="GO:0006412">
    <property type="term" value="P:translation"/>
    <property type="evidence" value="ECO:0007669"/>
    <property type="project" value="UniProtKB-UniRule"/>
</dbReference>
<dbReference type="CDD" id="cd01433">
    <property type="entry name" value="Ribosomal_L16_L10e"/>
    <property type="match status" value="1"/>
</dbReference>
<dbReference type="FunFam" id="3.90.1170.10:FF:000001">
    <property type="entry name" value="50S ribosomal protein L16"/>
    <property type="match status" value="1"/>
</dbReference>
<dbReference type="Gene3D" id="3.90.1170.10">
    <property type="entry name" value="Ribosomal protein L10e/L16"/>
    <property type="match status" value="1"/>
</dbReference>
<dbReference type="HAMAP" id="MF_01342">
    <property type="entry name" value="Ribosomal_uL16"/>
    <property type="match status" value="1"/>
</dbReference>
<dbReference type="InterPro" id="IPR047873">
    <property type="entry name" value="Ribosomal_uL16"/>
</dbReference>
<dbReference type="InterPro" id="IPR000114">
    <property type="entry name" value="Ribosomal_uL16_bact-type"/>
</dbReference>
<dbReference type="InterPro" id="IPR020798">
    <property type="entry name" value="Ribosomal_uL16_CS"/>
</dbReference>
<dbReference type="InterPro" id="IPR016180">
    <property type="entry name" value="Ribosomal_uL16_dom"/>
</dbReference>
<dbReference type="InterPro" id="IPR036920">
    <property type="entry name" value="Ribosomal_uL16_sf"/>
</dbReference>
<dbReference type="NCBIfam" id="TIGR01164">
    <property type="entry name" value="rplP_bact"/>
    <property type="match status" value="1"/>
</dbReference>
<dbReference type="PANTHER" id="PTHR12220">
    <property type="entry name" value="50S/60S RIBOSOMAL PROTEIN L16"/>
    <property type="match status" value="1"/>
</dbReference>
<dbReference type="PANTHER" id="PTHR12220:SF13">
    <property type="entry name" value="LARGE RIBOSOMAL SUBUNIT PROTEIN UL16M"/>
    <property type="match status" value="1"/>
</dbReference>
<dbReference type="Pfam" id="PF00252">
    <property type="entry name" value="Ribosomal_L16"/>
    <property type="match status" value="1"/>
</dbReference>
<dbReference type="PRINTS" id="PR00060">
    <property type="entry name" value="RIBOSOMALL16"/>
</dbReference>
<dbReference type="SUPFAM" id="SSF54686">
    <property type="entry name" value="Ribosomal protein L16p/L10e"/>
    <property type="match status" value="1"/>
</dbReference>
<dbReference type="PROSITE" id="PS00586">
    <property type="entry name" value="RIBOSOMAL_L16_1"/>
    <property type="match status" value="1"/>
</dbReference>
<dbReference type="PROSITE" id="PS00701">
    <property type="entry name" value="RIBOSOMAL_L16_2"/>
    <property type="match status" value="1"/>
</dbReference>
<gene>
    <name evidence="1" type="primary">rplP</name>
    <name type="ordered locus">RC0999</name>
</gene>
<name>RL16_RICCN</name>
<accession>Q92GX3</accession>
<evidence type="ECO:0000255" key="1">
    <source>
        <dbReference type="HAMAP-Rule" id="MF_01342"/>
    </source>
</evidence>
<evidence type="ECO:0000305" key="2"/>
<sequence>MLAPKKQKFRKAHKGRVASTAKAGTTLAFGSFGLKSIDGWRVTARQIEAGRKAATRCMKRQGRLWIRIFPDVPVSKKPAEVRMGKGKGSPEFFAVRVSPGRIMFEIEGVEENVALRALELASAKLPVRTRIVRRYE</sequence>